<reference key="1">
    <citation type="submission" date="2004-06" db="EMBL/GenBank/DDBJ databases">
        <authorList>
            <consortium name="NIH - Xenopus Gene Collection (XGC) project"/>
        </authorList>
    </citation>
    <scope>NUCLEOTIDE SEQUENCE [LARGE SCALE MRNA]</scope>
    <source>
        <tissue>Embryo</tissue>
    </source>
</reference>
<comment type="function">
    <text evidence="1 2">Atypical mitochondrial nucleoside-triphosphatase (NTPase) involved in mitochondrial trafficking. Probably involved in control of anterograde transport of mitochondria and their subcellular distribution. Can hydrolyze GTP, ATP and UTP (By similarity).</text>
</comment>
<comment type="catalytic activity">
    <reaction evidence="2">
        <text>GTP + H2O = GDP + phosphate + H(+)</text>
        <dbReference type="Rhea" id="RHEA:19669"/>
        <dbReference type="ChEBI" id="CHEBI:15377"/>
        <dbReference type="ChEBI" id="CHEBI:15378"/>
        <dbReference type="ChEBI" id="CHEBI:37565"/>
        <dbReference type="ChEBI" id="CHEBI:43474"/>
        <dbReference type="ChEBI" id="CHEBI:58189"/>
    </reaction>
    <physiologicalReaction direction="left-to-right" evidence="2">
        <dbReference type="Rhea" id="RHEA:19670"/>
    </physiologicalReaction>
</comment>
<comment type="catalytic activity">
    <reaction evidence="1">
        <text>ATP + H2O = ADP + phosphate + H(+)</text>
        <dbReference type="Rhea" id="RHEA:13065"/>
        <dbReference type="ChEBI" id="CHEBI:15377"/>
        <dbReference type="ChEBI" id="CHEBI:15378"/>
        <dbReference type="ChEBI" id="CHEBI:30616"/>
        <dbReference type="ChEBI" id="CHEBI:43474"/>
        <dbReference type="ChEBI" id="CHEBI:456216"/>
    </reaction>
    <physiologicalReaction direction="left-to-right" evidence="1">
        <dbReference type="Rhea" id="RHEA:13066"/>
    </physiologicalReaction>
</comment>
<comment type="catalytic activity">
    <reaction evidence="1">
        <text>UTP + H2O = UDP + phosphate + H(+)</text>
        <dbReference type="Rhea" id="RHEA:64900"/>
        <dbReference type="ChEBI" id="CHEBI:15377"/>
        <dbReference type="ChEBI" id="CHEBI:15378"/>
        <dbReference type="ChEBI" id="CHEBI:43474"/>
        <dbReference type="ChEBI" id="CHEBI:46398"/>
        <dbReference type="ChEBI" id="CHEBI:58223"/>
    </reaction>
    <physiologicalReaction direction="left-to-right" evidence="1">
        <dbReference type="Rhea" id="RHEA:64901"/>
    </physiologicalReaction>
</comment>
<comment type="subunit">
    <text evidence="1">Homodimer.</text>
</comment>
<comment type="subcellular location">
    <subcellularLocation>
        <location evidence="1">Mitochondrion outer membrane</location>
        <topology evidence="1">Single-pass type IV membrane protein</topology>
    </subcellularLocation>
</comment>
<comment type="similarity">
    <text evidence="5 6">Belongs to the mitochondrial Rho GTPase family.</text>
</comment>
<feature type="chain" id="PRO_0000239324" description="Mitochondrial Rho GTPase 2">
    <location>
        <begin position="1"/>
        <end position="616"/>
    </location>
</feature>
<feature type="topological domain" description="Cytoplasmic" evidence="3">
    <location>
        <begin position="1"/>
        <end position="590"/>
    </location>
</feature>
<feature type="transmembrane region" description="Helical; Anchor for type IV membrane protein" evidence="3">
    <location>
        <begin position="591"/>
        <end position="613"/>
    </location>
</feature>
<feature type="topological domain" description="Mitochondrial intermembrane" evidence="3">
    <location>
        <begin position="614"/>
        <end position="616"/>
    </location>
</feature>
<feature type="domain" description="Miro 1" evidence="5">
    <location>
        <begin position="2"/>
        <end position="168"/>
    </location>
</feature>
<feature type="domain" description="EF-hand 1" evidence="6">
    <location>
        <begin position="184"/>
        <end position="219"/>
    </location>
</feature>
<feature type="domain" description="EF-hand 2" evidence="4">
    <location>
        <begin position="304"/>
        <end position="339"/>
    </location>
</feature>
<feature type="domain" description="Miro 2" evidence="5">
    <location>
        <begin position="416"/>
        <end position="577"/>
    </location>
</feature>
<feature type="binding site" evidence="2">
    <location>
        <position position="16"/>
    </location>
    <ligand>
        <name>GTP</name>
        <dbReference type="ChEBI" id="CHEBI:37565"/>
        <label>1</label>
    </ligand>
</feature>
<feature type="binding site" evidence="2">
    <location>
        <position position="17"/>
    </location>
    <ligand>
        <name>GTP</name>
        <dbReference type="ChEBI" id="CHEBI:37565"/>
        <label>1</label>
    </ligand>
</feature>
<feature type="binding site" evidence="2">
    <location>
        <position position="18"/>
    </location>
    <ligand>
        <name>GTP</name>
        <dbReference type="ChEBI" id="CHEBI:37565"/>
        <label>1</label>
    </ligand>
</feature>
<feature type="binding site" evidence="2">
    <location>
        <position position="18"/>
    </location>
    <ligand>
        <name>Mg(2+)</name>
        <dbReference type="ChEBI" id="CHEBI:18420"/>
        <label>1</label>
    </ligand>
</feature>
<feature type="binding site" evidence="2">
    <location>
        <position position="19"/>
    </location>
    <ligand>
        <name>GTP</name>
        <dbReference type="ChEBI" id="CHEBI:37565"/>
        <label>1</label>
    </ligand>
</feature>
<feature type="binding site" evidence="2">
    <location>
        <position position="57"/>
    </location>
    <ligand>
        <name>Mg(2+)</name>
        <dbReference type="ChEBI" id="CHEBI:18420"/>
        <label>1</label>
    </ligand>
</feature>
<feature type="binding site" evidence="2">
    <location>
        <position position="59"/>
    </location>
    <ligand>
        <name>GTP</name>
        <dbReference type="ChEBI" id="CHEBI:37565"/>
        <label>1</label>
    </ligand>
</feature>
<feature type="binding site" evidence="2">
    <location>
        <position position="118"/>
    </location>
    <ligand>
        <name>GTP</name>
        <dbReference type="ChEBI" id="CHEBI:37565"/>
        <label>1</label>
    </ligand>
</feature>
<feature type="binding site" evidence="2">
    <location>
        <position position="119"/>
    </location>
    <ligand>
        <name>GTP</name>
        <dbReference type="ChEBI" id="CHEBI:37565"/>
        <label>1</label>
    </ligand>
</feature>
<feature type="binding site" evidence="2">
    <location>
        <position position="121"/>
    </location>
    <ligand>
        <name>GTP</name>
        <dbReference type="ChEBI" id="CHEBI:37565"/>
        <label>1</label>
    </ligand>
</feature>
<feature type="binding site" evidence="2">
    <location>
        <position position="149"/>
    </location>
    <ligand>
        <name>GTP</name>
        <dbReference type="ChEBI" id="CHEBI:37565"/>
        <label>1</label>
    </ligand>
</feature>
<feature type="binding site" evidence="2">
    <location>
        <position position="150"/>
    </location>
    <ligand>
        <name>GTP</name>
        <dbReference type="ChEBI" id="CHEBI:37565"/>
        <label>1</label>
    </ligand>
</feature>
<feature type="binding site" evidence="6">
    <location>
        <position position="199"/>
    </location>
    <ligand>
        <name>Ca(2+)</name>
        <dbReference type="ChEBI" id="CHEBI:29108"/>
        <label>1</label>
    </ligand>
</feature>
<feature type="binding site" evidence="6">
    <location>
        <position position="201"/>
    </location>
    <ligand>
        <name>Ca(2+)</name>
        <dbReference type="ChEBI" id="CHEBI:29108"/>
        <label>1</label>
    </ligand>
</feature>
<feature type="binding site" evidence="6">
    <location>
        <position position="208"/>
    </location>
    <ligand>
        <name>Ca(2+)</name>
        <dbReference type="ChEBI" id="CHEBI:29108"/>
        <label>1</label>
    </ligand>
</feature>
<feature type="binding site" evidence="4">
    <location>
        <position position="317"/>
    </location>
    <ligand>
        <name>Ca(2+)</name>
        <dbReference type="ChEBI" id="CHEBI:29108"/>
        <label>2</label>
    </ligand>
</feature>
<feature type="binding site" evidence="4">
    <location>
        <position position="319"/>
    </location>
    <ligand>
        <name>Ca(2+)</name>
        <dbReference type="ChEBI" id="CHEBI:29108"/>
        <label>2</label>
    </ligand>
</feature>
<feature type="binding site" evidence="4">
    <location>
        <position position="321"/>
    </location>
    <ligand>
        <name>Ca(2+)</name>
        <dbReference type="ChEBI" id="CHEBI:29108"/>
        <label>2</label>
    </ligand>
</feature>
<feature type="binding site" evidence="4">
    <location>
        <position position="328"/>
    </location>
    <ligand>
        <name>Ca(2+)</name>
        <dbReference type="ChEBI" id="CHEBI:29108"/>
        <label>2</label>
    </ligand>
</feature>
<feature type="binding site" evidence="1">
    <location>
        <position position="428"/>
    </location>
    <ligand>
        <name>GTP</name>
        <dbReference type="ChEBI" id="CHEBI:37565"/>
        <label>2</label>
    </ligand>
</feature>
<feature type="binding site" evidence="1">
    <location>
        <position position="430"/>
    </location>
    <ligand>
        <name>GTP</name>
        <dbReference type="ChEBI" id="CHEBI:37565"/>
        <label>2</label>
    </ligand>
</feature>
<feature type="binding site" evidence="1">
    <location>
        <position position="431"/>
    </location>
    <ligand>
        <name>GTP</name>
        <dbReference type="ChEBI" id="CHEBI:37565"/>
        <label>2</label>
    </ligand>
</feature>
<feature type="binding site" evidence="1">
    <location>
        <position position="432"/>
    </location>
    <ligand>
        <name>GTP</name>
        <dbReference type="ChEBI" id="CHEBI:37565"/>
        <label>2</label>
    </ligand>
</feature>
<feature type="binding site" evidence="1">
    <location>
        <position position="432"/>
    </location>
    <ligand>
        <name>Mg(2+)</name>
        <dbReference type="ChEBI" id="CHEBI:18420"/>
        <label>2</label>
    </ligand>
</feature>
<feature type="binding site" evidence="1">
    <location>
        <position position="433"/>
    </location>
    <ligand>
        <name>GTP</name>
        <dbReference type="ChEBI" id="CHEBI:37565"/>
        <label>2</label>
    </ligand>
</feature>
<feature type="binding site" evidence="1">
    <location>
        <position position="474"/>
    </location>
    <ligand>
        <name>Mg(2+)</name>
        <dbReference type="ChEBI" id="CHEBI:18420"/>
        <label>2</label>
    </ligand>
</feature>
<feature type="binding site" evidence="1">
    <location>
        <position position="528"/>
    </location>
    <ligand>
        <name>GTP</name>
        <dbReference type="ChEBI" id="CHEBI:37565"/>
        <label>2</label>
    </ligand>
</feature>
<feature type="binding site" evidence="1">
    <location>
        <position position="530"/>
    </location>
    <ligand>
        <name>GTP</name>
        <dbReference type="ChEBI" id="CHEBI:37565"/>
        <label>2</label>
    </ligand>
</feature>
<feature type="binding site" evidence="1">
    <location>
        <position position="559"/>
    </location>
    <ligand>
        <name>GTP</name>
        <dbReference type="ChEBI" id="CHEBI:37565"/>
        <label>2</label>
    </ligand>
</feature>
<proteinExistence type="evidence at transcript level"/>
<evidence type="ECO:0000250" key="1">
    <source>
        <dbReference type="UniProtKB" id="Q8IXI1"/>
    </source>
</evidence>
<evidence type="ECO:0000250" key="2">
    <source>
        <dbReference type="UniProtKB" id="Q8IXI2"/>
    </source>
</evidence>
<evidence type="ECO:0000255" key="3"/>
<evidence type="ECO:0000255" key="4">
    <source>
        <dbReference type="PROSITE-ProRule" id="PRU00448"/>
    </source>
</evidence>
<evidence type="ECO:0000255" key="5">
    <source>
        <dbReference type="PROSITE-ProRule" id="PRU00757"/>
    </source>
</evidence>
<evidence type="ECO:0000305" key="6"/>
<name>MIRO2_XENTR</name>
<keyword id="KW-0106">Calcium</keyword>
<keyword id="KW-0342">GTP-binding</keyword>
<keyword id="KW-0378">Hydrolase</keyword>
<keyword id="KW-0460">Magnesium</keyword>
<keyword id="KW-0472">Membrane</keyword>
<keyword id="KW-0479">Metal-binding</keyword>
<keyword id="KW-0496">Mitochondrion</keyword>
<keyword id="KW-1000">Mitochondrion outer membrane</keyword>
<keyword id="KW-0547">Nucleotide-binding</keyword>
<keyword id="KW-1185">Reference proteome</keyword>
<keyword id="KW-0677">Repeat</keyword>
<keyword id="KW-0812">Transmembrane</keyword>
<keyword id="KW-1133">Transmembrane helix</keyword>
<sequence>MKRDVRILLLGEAQVGKTSLIMALVGEEFPDEVPSRAEEITIPADVTPERIPTHIVDYSGVEQTEDELREEIAKANVVCVVYDVTDLETIEKIGSKWIPMVNGNAERNSRLPIILVGNKSDLQCGSSMESILPIMNQFSEIETCVECSAKNLKNISEVFYYAQKAVLHPTAPLYDPEEKQLRPQCKKALTRIFTISEQDNNQILSDEELNFFQQSCFGNPLAPQALEDVKMVVKKNTADGVRDNGLTLNGFLFLNTLFIQRGRHETTWTILRRFGYDDALELTDDYLYPPLRIPHESSTELNHFGYQFLQKAFEKHDLDEDGALSPSELQSFFSVFPYTPWGPELASTVCTAQGGYLPLHGYLCQWTLVAYLDVHRCLEHLGYLGYPILCEQESQTHAITVTREKSIDLEKGQTQRNVFLCRVIGPRGTGKSAFLRAFLGQSLEEQQQSNKPPSFYSVNTVLVGGQEKYLILFEVDVDTEFLKTSDAPCDVACLMYDVSDSKSFNYCASIYKQHYMESQTPCLFVGCKYDQGEVKQQHGISPAEFCHKHRLPPPYHFTCQGTPDRTIYSKLATAAAFPHLHDTELSTASFWLRVALGATVAAVVGFTLYKALLRSK</sequence>
<gene>
    <name type="primary">rhot2</name>
</gene>
<protein>
    <recommendedName>
        <fullName>Mitochondrial Rho GTPase 2</fullName>
        <shortName>MIRO-2</shortName>
        <ecNumber evidence="2">3.6.5.-</ecNumber>
    </recommendedName>
    <alternativeName>
        <fullName>Ras homolog gene family member T2</fullName>
    </alternativeName>
</protein>
<accession>Q6DIS1</accession>
<dbReference type="EC" id="3.6.5.-" evidence="2"/>
<dbReference type="EMBL" id="BC075464">
    <property type="protein sequence ID" value="AAH75464.1"/>
    <property type="molecule type" value="mRNA"/>
</dbReference>
<dbReference type="RefSeq" id="NP_001006725.1">
    <property type="nucleotide sequence ID" value="NM_001006724.1"/>
</dbReference>
<dbReference type="SMR" id="Q6DIS1"/>
<dbReference type="FunCoup" id="Q6DIS1">
    <property type="interactions" value="2539"/>
</dbReference>
<dbReference type="STRING" id="8364.ENSXETP00000021073"/>
<dbReference type="PaxDb" id="8364-ENSXETP00000007838"/>
<dbReference type="DNASU" id="448378"/>
<dbReference type="GeneID" id="448378"/>
<dbReference type="KEGG" id="xtr:448378"/>
<dbReference type="AGR" id="Xenbase:XB-GENE-489616"/>
<dbReference type="CTD" id="89941"/>
<dbReference type="Xenbase" id="XB-GENE-489616">
    <property type="gene designation" value="rhot2"/>
</dbReference>
<dbReference type="eggNOG" id="KOG1707">
    <property type="taxonomic scope" value="Eukaryota"/>
</dbReference>
<dbReference type="InParanoid" id="Q6DIS1"/>
<dbReference type="OMA" id="FWFAQKA"/>
<dbReference type="OrthoDB" id="10020961at2759"/>
<dbReference type="Reactome" id="R-XTR-9013419">
    <property type="pathway name" value="RHOT2 GTPase cycle"/>
</dbReference>
<dbReference type="Proteomes" id="UP000008143">
    <property type="component" value="Chromosome 9"/>
</dbReference>
<dbReference type="Bgee" id="ENSXETG00000003628">
    <property type="expression patterns" value="Expressed in 4-cell stage embryo and 13 other cell types or tissues"/>
</dbReference>
<dbReference type="ExpressionAtlas" id="Q6DIS1">
    <property type="expression patterns" value="baseline"/>
</dbReference>
<dbReference type="GO" id="GO:0005741">
    <property type="term" value="C:mitochondrial outer membrane"/>
    <property type="evidence" value="ECO:0000250"/>
    <property type="project" value="UniProtKB"/>
</dbReference>
<dbReference type="GO" id="GO:0005509">
    <property type="term" value="F:calcium ion binding"/>
    <property type="evidence" value="ECO:0007669"/>
    <property type="project" value="InterPro"/>
</dbReference>
<dbReference type="GO" id="GO:0005525">
    <property type="term" value="F:GTP binding"/>
    <property type="evidence" value="ECO:0007669"/>
    <property type="project" value="UniProtKB-KW"/>
</dbReference>
<dbReference type="GO" id="GO:0003924">
    <property type="term" value="F:GTPase activity"/>
    <property type="evidence" value="ECO:0007669"/>
    <property type="project" value="InterPro"/>
</dbReference>
<dbReference type="GO" id="GO:0019725">
    <property type="term" value="P:cellular homeostasis"/>
    <property type="evidence" value="ECO:0000250"/>
    <property type="project" value="UniProtKB"/>
</dbReference>
<dbReference type="GO" id="GO:0097345">
    <property type="term" value="P:mitochondrial outer membrane permeabilization"/>
    <property type="evidence" value="ECO:0000250"/>
    <property type="project" value="UniProtKB"/>
</dbReference>
<dbReference type="GO" id="GO:0047497">
    <property type="term" value="P:mitochondrion transport along microtubule"/>
    <property type="evidence" value="ECO:0000250"/>
    <property type="project" value="UniProtKB"/>
</dbReference>
<dbReference type="CDD" id="cd01893">
    <property type="entry name" value="Miro1"/>
    <property type="match status" value="1"/>
</dbReference>
<dbReference type="CDD" id="cd01892">
    <property type="entry name" value="Miro2"/>
    <property type="match status" value="1"/>
</dbReference>
<dbReference type="FunFam" id="1.10.238.10:FF:000011">
    <property type="entry name" value="Mitochondrial Rho GTPase"/>
    <property type="match status" value="1"/>
</dbReference>
<dbReference type="FunFam" id="1.10.238.10:FF:000021">
    <property type="entry name" value="Mitochondrial Rho GTPase"/>
    <property type="match status" value="1"/>
</dbReference>
<dbReference type="FunFam" id="3.40.50.300:FF:000170">
    <property type="entry name" value="Mitochondrial Rho GTPase"/>
    <property type="match status" value="1"/>
</dbReference>
<dbReference type="FunFam" id="3.40.50.300:FF:000553">
    <property type="entry name" value="Mitochondrial Rho GTPase"/>
    <property type="match status" value="1"/>
</dbReference>
<dbReference type="Gene3D" id="1.10.238.10">
    <property type="entry name" value="EF-hand"/>
    <property type="match status" value="2"/>
</dbReference>
<dbReference type="Gene3D" id="3.40.50.300">
    <property type="entry name" value="P-loop containing nucleotide triphosphate hydrolases"/>
    <property type="match status" value="2"/>
</dbReference>
<dbReference type="InterPro" id="IPR011992">
    <property type="entry name" value="EF-hand-dom_pair"/>
</dbReference>
<dbReference type="InterPro" id="IPR018247">
    <property type="entry name" value="EF_Hand_1_Ca_BS"/>
</dbReference>
<dbReference type="InterPro" id="IPR013566">
    <property type="entry name" value="EF_hand_assoc_1"/>
</dbReference>
<dbReference type="InterPro" id="IPR013567">
    <property type="entry name" value="EF_hand_assoc_2"/>
</dbReference>
<dbReference type="InterPro" id="IPR002048">
    <property type="entry name" value="EF_hand_dom"/>
</dbReference>
<dbReference type="InterPro" id="IPR021181">
    <property type="entry name" value="Miro"/>
</dbReference>
<dbReference type="InterPro" id="IPR052266">
    <property type="entry name" value="Miro-EF-hand_domain"/>
</dbReference>
<dbReference type="InterPro" id="IPR020860">
    <property type="entry name" value="MIRO_dom"/>
</dbReference>
<dbReference type="InterPro" id="IPR027417">
    <property type="entry name" value="P-loop_NTPase"/>
</dbReference>
<dbReference type="InterPro" id="IPR005225">
    <property type="entry name" value="Small_GTP-bd"/>
</dbReference>
<dbReference type="InterPro" id="IPR001806">
    <property type="entry name" value="Small_GTPase"/>
</dbReference>
<dbReference type="NCBIfam" id="TIGR00231">
    <property type="entry name" value="small_GTP"/>
    <property type="match status" value="1"/>
</dbReference>
<dbReference type="PANTHER" id="PTHR46819">
    <property type="entry name" value="EF-HAND CALCIUM-BINDING DOMAIN-CONTAINING PROTEIN 7"/>
    <property type="match status" value="1"/>
</dbReference>
<dbReference type="PANTHER" id="PTHR46819:SF1">
    <property type="entry name" value="EF-HAND CALCIUM-BINDING DOMAIN-CONTAINING PROTEIN 7"/>
    <property type="match status" value="1"/>
</dbReference>
<dbReference type="Pfam" id="PF08355">
    <property type="entry name" value="EF_assoc_1"/>
    <property type="match status" value="1"/>
</dbReference>
<dbReference type="Pfam" id="PF08356">
    <property type="entry name" value="EF_assoc_2"/>
    <property type="match status" value="1"/>
</dbReference>
<dbReference type="Pfam" id="PF00071">
    <property type="entry name" value="Ras"/>
    <property type="match status" value="2"/>
</dbReference>
<dbReference type="PIRSF" id="PIRSF037488">
    <property type="entry name" value="Mt_Rho_GTPase"/>
    <property type="match status" value="1"/>
</dbReference>
<dbReference type="PRINTS" id="PR00449">
    <property type="entry name" value="RASTRNSFRMNG"/>
</dbReference>
<dbReference type="SMART" id="SM00175">
    <property type="entry name" value="RAB"/>
    <property type="match status" value="1"/>
</dbReference>
<dbReference type="SMART" id="SM00173">
    <property type="entry name" value="RAS"/>
    <property type="match status" value="1"/>
</dbReference>
<dbReference type="SMART" id="SM00174">
    <property type="entry name" value="RHO"/>
    <property type="match status" value="1"/>
</dbReference>
<dbReference type="SUPFAM" id="SSF47473">
    <property type="entry name" value="EF-hand"/>
    <property type="match status" value="1"/>
</dbReference>
<dbReference type="SUPFAM" id="SSF52540">
    <property type="entry name" value="P-loop containing nucleoside triphosphate hydrolases"/>
    <property type="match status" value="2"/>
</dbReference>
<dbReference type="PROSITE" id="PS00018">
    <property type="entry name" value="EF_HAND_1"/>
    <property type="match status" value="1"/>
</dbReference>
<dbReference type="PROSITE" id="PS50222">
    <property type="entry name" value="EF_HAND_2"/>
    <property type="match status" value="1"/>
</dbReference>
<dbReference type="PROSITE" id="PS51423">
    <property type="entry name" value="MIRO"/>
    <property type="match status" value="2"/>
</dbReference>
<organism>
    <name type="scientific">Xenopus tropicalis</name>
    <name type="common">Western clawed frog</name>
    <name type="synonym">Silurana tropicalis</name>
    <dbReference type="NCBI Taxonomy" id="8364"/>
    <lineage>
        <taxon>Eukaryota</taxon>
        <taxon>Metazoa</taxon>
        <taxon>Chordata</taxon>
        <taxon>Craniata</taxon>
        <taxon>Vertebrata</taxon>
        <taxon>Euteleostomi</taxon>
        <taxon>Amphibia</taxon>
        <taxon>Batrachia</taxon>
        <taxon>Anura</taxon>
        <taxon>Pipoidea</taxon>
        <taxon>Pipidae</taxon>
        <taxon>Xenopodinae</taxon>
        <taxon>Xenopus</taxon>
        <taxon>Silurana</taxon>
    </lineage>
</organism>